<organism>
    <name type="scientific">Helicobacter pylori (strain ATCC 700392 / 26695)</name>
    <name type="common">Campylobacter pylori</name>
    <dbReference type="NCBI Taxonomy" id="85962"/>
    <lineage>
        <taxon>Bacteria</taxon>
        <taxon>Pseudomonadati</taxon>
        <taxon>Campylobacterota</taxon>
        <taxon>Epsilonproteobacteria</taxon>
        <taxon>Campylobacterales</taxon>
        <taxon>Helicobacteraceae</taxon>
        <taxon>Helicobacter</taxon>
    </lineage>
</organism>
<dbReference type="EMBL" id="AE000511">
    <property type="protein sequence ID" value="AAD07148.1"/>
    <property type="molecule type" value="Genomic_DNA"/>
</dbReference>
<dbReference type="PIR" id="E64529">
    <property type="entry name" value="E64529"/>
</dbReference>
<dbReference type="RefSeq" id="NP_206877.1">
    <property type="nucleotide sequence ID" value="NC_000915.1"/>
</dbReference>
<dbReference type="RefSeq" id="WP_000025135.1">
    <property type="nucleotide sequence ID" value="NC_018939.1"/>
</dbReference>
<dbReference type="SMR" id="P55998"/>
<dbReference type="FunCoup" id="P55998">
    <property type="interactions" value="315"/>
</dbReference>
<dbReference type="IntAct" id="P55998">
    <property type="interactions" value="3"/>
</dbReference>
<dbReference type="STRING" id="85962.HP_0077"/>
<dbReference type="PaxDb" id="85962-C694_00375"/>
<dbReference type="EnsemblBacteria" id="AAD07148">
    <property type="protein sequence ID" value="AAD07148"/>
    <property type="gene ID" value="HP_0077"/>
</dbReference>
<dbReference type="KEGG" id="heo:C694_00375"/>
<dbReference type="KEGG" id="hpy:HP_0077"/>
<dbReference type="PATRIC" id="fig|85962.47.peg.81"/>
<dbReference type="eggNOG" id="COG0216">
    <property type="taxonomic scope" value="Bacteria"/>
</dbReference>
<dbReference type="InParanoid" id="P55998"/>
<dbReference type="OrthoDB" id="9806673at2"/>
<dbReference type="PhylomeDB" id="P55998"/>
<dbReference type="Proteomes" id="UP000000429">
    <property type="component" value="Chromosome"/>
</dbReference>
<dbReference type="GO" id="GO:0005737">
    <property type="term" value="C:cytoplasm"/>
    <property type="evidence" value="ECO:0007669"/>
    <property type="project" value="UniProtKB-SubCell"/>
</dbReference>
<dbReference type="GO" id="GO:0016149">
    <property type="term" value="F:translation release factor activity, codon specific"/>
    <property type="evidence" value="ECO:0007669"/>
    <property type="project" value="UniProtKB-UniRule"/>
</dbReference>
<dbReference type="FunFam" id="3.30.160.20:FF:000004">
    <property type="entry name" value="Peptide chain release factor 1"/>
    <property type="match status" value="1"/>
</dbReference>
<dbReference type="FunFam" id="3.30.70.1660:FF:000002">
    <property type="entry name" value="Peptide chain release factor 1"/>
    <property type="match status" value="1"/>
</dbReference>
<dbReference type="FunFam" id="3.30.70.1660:FF:000004">
    <property type="entry name" value="Peptide chain release factor 1"/>
    <property type="match status" value="1"/>
</dbReference>
<dbReference type="Gene3D" id="3.30.160.20">
    <property type="match status" value="1"/>
</dbReference>
<dbReference type="Gene3D" id="3.30.70.1660">
    <property type="match status" value="1"/>
</dbReference>
<dbReference type="Gene3D" id="6.10.140.1950">
    <property type="match status" value="1"/>
</dbReference>
<dbReference type="HAMAP" id="MF_00093">
    <property type="entry name" value="Rel_fac_1"/>
    <property type="match status" value="1"/>
</dbReference>
<dbReference type="InterPro" id="IPR005139">
    <property type="entry name" value="PCRF"/>
</dbReference>
<dbReference type="InterPro" id="IPR000352">
    <property type="entry name" value="Pep_chain_release_fac_I"/>
</dbReference>
<dbReference type="InterPro" id="IPR045853">
    <property type="entry name" value="Pep_chain_release_fac_I_sf"/>
</dbReference>
<dbReference type="InterPro" id="IPR050057">
    <property type="entry name" value="Prokaryotic/Mito_RF"/>
</dbReference>
<dbReference type="InterPro" id="IPR004373">
    <property type="entry name" value="RF-1"/>
</dbReference>
<dbReference type="NCBIfam" id="TIGR00019">
    <property type="entry name" value="prfA"/>
    <property type="match status" value="1"/>
</dbReference>
<dbReference type="NCBIfam" id="NF001859">
    <property type="entry name" value="PRK00591.1"/>
    <property type="match status" value="1"/>
</dbReference>
<dbReference type="PANTHER" id="PTHR43804">
    <property type="entry name" value="LD18447P"/>
    <property type="match status" value="1"/>
</dbReference>
<dbReference type="PANTHER" id="PTHR43804:SF7">
    <property type="entry name" value="LD18447P"/>
    <property type="match status" value="1"/>
</dbReference>
<dbReference type="Pfam" id="PF03462">
    <property type="entry name" value="PCRF"/>
    <property type="match status" value="1"/>
</dbReference>
<dbReference type="Pfam" id="PF00472">
    <property type="entry name" value="RF-1"/>
    <property type="match status" value="1"/>
</dbReference>
<dbReference type="SMART" id="SM00937">
    <property type="entry name" value="PCRF"/>
    <property type="match status" value="1"/>
</dbReference>
<dbReference type="SUPFAM" id="SSF75620">
    <property type="entry name" value="Release factor"/>
    <property type="match status" value="1"/>
</dbReference>
<dbReference type="PROSITE" id="PS00745">
    <property type="entry name" value="RF_PROK_I"/>
    <property type="match status" value="1"/>
</dbReference>
<sequence>MSILAEKLSSILKRYDELTALLSSAEVVSDIKKLTELSKEQSSIEEISIASKEYLSVLENIKENKELLEDKELSELAKEELKILEIQKSDLETAIKQLLIPKDPNDDKNIYLELRAGTGGDEAGIFVGDLFKAYCRYADLKKWKVEIVSSSENSVGGYKEIIALIKGKGVYSRLKFEAGTHRVQRVPETESQGRIHTSAITVAIMPEVDDVEVSINPSDLKIEVFRAGGHGGQCVNTTDSAVRITHLPTNISVSMQDEKSQHKNKDKALKILKARLYEKQIEEQQLANAKDRKEQVGSGDRSERIRTYNYPQNRLSEHRINLTLYSLEEIMLSGNLDEVINPLIAHAQSQFE</sequence>
<name>RF1_HELPY</name>
<proteinExistence type="inferred from homology"/>
<accession>P55998</accession>
<keyword id="KW-0963">Cytoplasm</keyword>
<keyword id="KW-0488">Methylation</keyword>
<keyword id="KW-0648">Protein biosynthesis</keyword>
<keyword id="KW-1185">Reference proteome</keyword>
<gene>
    <name type="primary">prfA</name>
    <name type="ordered locus">HP_0077</name>
</gene>
<comment type="function">
    <text evidence="1">Peptide chain release factor 1 directs the termination of translation in response to the peptide chain termination codons UAG and UAA.</text>
</comment>
<comment type="subcellular location">
    <subcellularLocation>
        <location evidence="1">Cytoplasm</location>
    </subcellularLocation>
</comment>
<comment type="PTM">
    <text evidence="1">Methylated by PrmC. Methylation increases the termination efficiency of RF1 (By similarity).</text>
</comment>
<comment type="similarity">
    <text evidence="3">Belongs to the prokaryotic/mitochondrial release factor family.</text>
</comment>
<reference key="1">
    <citation type="journal article" date="1997" name="Nature">
        <title>The complete genome sequence of the gastric pathogen Helicobacter pylori.</title>
        <authorList>
            <person name="Tomb J.-F."/>
            <person name="White O."/>
            <person name="Kerlavage A.R."/>
            <person name="Clayton R.A."/>
            <person name="Sutton G.G."/>
            <person name="Fleischmann R.D."/>
            <person name="Ketchum K.A."/>
            <person name="Klenk H.-P."/>
            <person name="Gill S.R."/>
            <person name="Dougherty B.A."/>
            <person name="Nelson K.E."/>
            <person name="Quackenbush J."/>
            <person name="Zhou L."/>
            <person name="Kirkness E.F."/>
            <person name="Peterson S.N."/>
            <person name="Loftus B.J."/>
            <person name="Richardson D.L."/>
            <person name="Dodson R.J."/>
            <person name="Khalak H.G."/>
            <person name="Glodek A."/>
            <person name="McKenney K."/>
            <person name="FitzGerald L.M."/>
            <person name="Lee N."/>
            <person name="Adams M.D."/>
            <person name="Hickey E.K."/>
            <person name="Berg D.E."/>
            <person name="Gocayne J.D."/>
            <person name="Utterback T.R."/>
            <person name="Peterson J.D."/>
            <person name="Kelley J.M."/>
            <person name="Cotton M.D."/>
            <person name="Weidman J.F."/>
            <person name="Fujii C."/>
            <person name="Bowman C."/>
            <person name="Watthey L."/>
            <person name="Wallin E."/>
            <person name="Hayes W.S."/>
            <person name="Borodovsky M."/>
            <person name="Karp P.D."/>
            <person name="Smith H.O."/>
            <person name="Fraser C.M."/>
            <person name="Venter J.C."/>
        </authorList>
    </citation>
    <scope>NUCLEOTIDE SEQUENCE [LARGE SCALE GENOMIC DNA]</scope>
    <source>
        <strain>ATCC 700392 / 26695</strain>
    </source>
</reference>
<feature type="chain" id="PRO_0000177681" description="Peptide chain release factor 1">
    <location>
        <begin position="1"/>
        <end position="352"/>
    </location>
</feature>
<feature type="region of interest" description="Disordered" evidence="2">
    <location>
        <begin position="288"/>
        <end position="309"/>
    </location>
</feature>
<feature type="compositionally biased region" description="Basic and acidic residues" evidence="2">
    <location>
        <begin position="289"/>
        <end position="306"/>
    </location>
</feature>
<feature type="modified residue" description="N5-methylglutamine" evidence="1">
    <location>
        <position position="233"/>
    </location>
</feature>
<protein>
    <recommendedName>
        <fullName>Peptide chain release factor 1</fullName>
        <shortName>RF-1</shortName>
    </recommendedName>
</protein>
<evidence type="ECO:0000250" key="1"/>
<evidence type="ECO:0000256" key="2">
    <source>
        <dbReference type="SAM" id="MobiDB-lite"/>
    </source>
</evidence>
<evidence type="ECO:0000305" key="3"/>